<proteinExistence type="inferred from homology"/>
<sequence length="402" mass="43305">MVMTQRIAVLGATGSIGDSTLAILAAQPQYYDVYALSGYHRLDKLLALCQQFAPKRVGVPTTAVDDFAKRLSAAGLDIEVVGGDAGLVDIATDSQTDTVVAAIVGAAGLPSTLAAARAGKRILLANKEALVMAGQVMINAVKTHHATLLPLDSEHNAIFQCLPFAIQQDNTQIHRSNHGVRKLWLTASGGPFLQQSFTQMQQASVAEAVKHPNWSMGQKISVDSATMMNKGLELIEACHLFDLPENKINVVIHPQSIIHSMVEYSDGSFLAQLGSPDMKTPIAHALSYPDRIDSGSQPLDLFALNGLEFIEPDLQKFACLRLAREAMQAGTHATIILNAANEIAVSAFLNNKIRLTDIADINEQALNEIQVPLLTETADIDEILAIDNLARQYTDKLVARLA</sequence>
<dbReference type="EC" id="1.1.1.267" evidence="1"/>
<dbReference type="EMBL" id="CP000082">
    <property type="protein sequence ID" value="AAZ19379.1"/>
    <property type="molecule type" value="Genomic_DNA"/>
</dbReference>
<dbReference type="RefSeq" id="WP_011280796.1">
    <property type="nucleotide sequence ID" value="NC_007204.1"/>
</dbReference>
<dbReference type="SMR" id="Q4FRH9"/>
<dbReference type="STRING" id="259536.Psyc_1531"/>
<dbReference type="KEGG" id="par:Psyc_1531"/>
<dbReference type="eggNOG" id="COG0743">
    <property type="taxonomic scope" value="Bacteria"/>
</dbReference>
<dbReference type="HOGENOM" id="CLU_035714_4_0_6"/>
<dbReference type="OrthoDB" id="9806546at2"/>
<dbReference type="UniPathway" id="UPA00056">
    <property type="reaction ID" value="UER00092"/>
</dbReference>
<dbReference type="Proteomes" id="UP000000546">
    <property type="component" value="Chromosome"/>
</dbReference>
<dbReference type="GO" id="GO:0030604">
    <property type="term" value="F:1-deoxy-D-xylulose-5-phosphate reductoisomerase activity"/>
    <property type="evidence" value="ECO:0007669"/>
    <property type="project" value="UniProtKB-UniRule"/>
</dbReference>
<dbReference type="GO" id="GO:0030145">
    <property type="term" value="F:manganese ion binding"/>
    <property type="evidence" value="ECO:0007669"/>
    <property type="project" value="TreeGrafter"/>
</dbReference>
<dbReference type="GO" id="GO:0070402">
    <property type="term" value="F:NADPH binding"/>
    <property type="evidence" value="ECO:0007669"/>
    <property type="project" value="InterPro"/>
</dbReference>
<dbReference type="GO" id="GO:0051484">
    <property type="term" value="P:isopentenyl diphosphate biosynthetic process, methylerythritol 4-phosphate pathway involved in terpenoid biosynthetic process"/>
    <property type="evidence" value="ECO:0007669"/>
    <property type="project" value="TreeGrafter"/>
</dbReference>
<dbReference type="FunFam" id="3.40.50.720:FF:000045">
    <property type="entry name" value="1-deoxy-D-xylulose 5-phosphate reductoisomerase"/>
    <property type="match status" value="1"/>
</dbReference>
<dbReference type="Gene3D" id="1.10.1740.10">
    <property type="match status" value="1"/>
</dbReference>
<dbReference type="Gene3D" id="3.40.50.720">
    <property type="entry name" value="NAD(P)-binding Rossmann-like Domain"/>
    <property type="match status" value="1"/>
</dbReference>
<dbReference type="HAMAP" id="MF_00183">
    <property type="entry name" value="DXP_reductoisom"/>
    <property type="match status" value="1"/>
</dbReference>
<dbReference type="InterPro" id="IPR003821">
    <property type="entry name" value="DXP_reductoisomerase"/>
</dbReference>
<dbReference type="InterPro" id="IPR013644">
    <property type="entry name" value="DXP_reductoisomerase_C"/>
</dbReference>
<dbReference type="InterPro" id="IPR013512">
    <property type="entry name" value="DXP_reductoisomerase_N"/>
</dbReference>
<dbReference type="InterPro" id="IPR026877">
    <property type="entry name" value="DXPR_C"/>
</dbReference>
<dbReference type="InterPro" id="IPR036169">
    <property type="entry name" value="DXPR_C_sf"/>
</dbReference>
<dbReference type="InterPro" id="IPR036291">
    <property type="entry name" value="NAD(P)-bd_dom_sf"/>
</dbReference>
<dbReference type="NCBIfam" id="TIGR00243">
    <property type="entry name" value="Dxr"/>
    <property type="match status" value="1"/>
</dbReference>
<dbReference type="NCBIfam" id="NF003938">
    <property type="entry name" value="PRK05447.1-1"/>
    <property type="match status" value="1"/>
</dbReference>
<dbReference type="NCBIfam" id="NF009114">
    <property type="entry name" value="PRK12464.1"/>
    <property type="match status" value="1"/>
</dbReference>
<dbReference type="PANTHER" id="PTHR30525">
    <property type="entry name" value="1-DEOXY-D-XYLULOSE 5-PHOSPHATE REDUCTOISOMERASE"/>
    <property type="match status" value="1"/>
</dbReference>
<dbReference type="PANTHER" id="PTHR30525:SF0">
    <property type="entry name" value="1-DEOXY-D-XYLULOSE 5-PHOSPHATE REDUCTOISOMERASE, CHLOROPLASTIC"/>
    <property type="match status" value="1"/>
</dbReference>
<dbReference type="Pfam" id="PF08436">
    <property type="entry name" value="DXP_redisom_C"/>
    <property type="match status" value="1"/>
</dbReference>
<dbReference type="Pfam" id="PF02670">
    <property type="entry name" value="DXP_reductoisom"/>
    <property type="match status" value="1"/>
</dbReference>
<dbReference type="Pfam" id="PF13288">
    <property type="entry name" value="DXPR_C"/>
    <property type="match status" value="1"/>
</dbReference>
<dbReference type="PIRSF" id="PIRSF006205">
    <property type="entry name" value="Dxp_reductismrs"/>
    <property type="match status" value="1"/>
</dbReference>
<dbReference type="SUPFAM" id="SSF69055">
    <property type="entry name" value="1-deoxy-D-xylulose-5-phosphate reductoisomerase, C-terminal domain"/>
    <property type="match status" value="1"/>
</dbReference>
<dbReference type="SUPFAM" id="SSF55347">
    <property type="entry name" value="Glyceraldehyde-3-phosphate dehydrogenase-like, C-terminal domain"/>
    <property type="match status" value="1"/>
</dbReference>
<dbReference type="SUPFAM" id="SSF51735">
    <property type="entry name" value="NAD(P)-binding Rossmann-fold domains"/>
    <property type="match status" value="1"/>
</dbReference>
<keyword id="KW-0414">Isoprene biosynthesis</keyword>
<keyword id="KW-0464">Manganese</keyword>
<keyword id="KW-0479">Metal-binding</keyword>
<keyword id="KW-0521">NADP</keyword>
<keyword id="KW-0560">Oxidoreductase</keyword>
<keyword id="KW-1185">Reference proteome</keyword>
<organism>
    <name type="scientific">Psychrobacter arcticus (strain DSM 17307 / VKM B-2377 / 273-4)</name>
    <dbReference type="NCBI Taxonomy" id="259536"/>
    <lineage>
        <taxon>Bacteria</taxon>
        <taxon>Pseudomonadati</taxon>
        <taxon>Pseudomonadota</taxon>
        <taxon>Gammaproteobacteria</taxon>
        <taxon>Moraxellales</taxon>
        <taxon>Moraxellaceae</taxon>
        <taxon>Psychrobacter</taxon>
    </lineage>
</organism>
<evidence type="ECO:0000255" key="1">
    <source>
        <dbReference type="HAMAP-Rule" id="MF_00183"/>
    </source>
</evidence>
<gene>
    <name evidence="1" type="primary">dxr</name>
    <name type="ordered locus">Psyc_1531</name>
</gene>
<comment type="function">
    <text evidence="1">Catalyzes the NADPH-dependent rearrangement and reduction of 1-deoxy-D-xylulose-5-phosphate (DXP) to 2-C-methyl-D-erythritol 4-phosphate (MEP).</text>
</comment>
<comment type="catalytic activity">
    <reaction evidence="1">
        <text>2-C-methyl-D-erythritol 4-phosphate + NADP(+) = 1-deoxy-D-xylulose 5-phosphate + NADPH + H(+)</text>
        <dbReference type="Rhea" id="RHEA:13717"/>
        <dbReference type="ChEBI" id="CHEBI:15378"/>
        <dbReference type="ChEBI" id="CHEBI:57783"/>
        <dbReference type="ChEBI" id="CHEBI:57792"/>
        <dbReference type="ChEBI" id="CHEBI:58262"/>
        <dbReference type="ChEBI" id="CHEBI:58349"/>
        <dbReference type="EC" id="1.1.1.267"/>
    </reaction>
    <physiologicalReaction direction="right-to-left" evidence="1">
        <dbReference type="Rhea" id="RHEA:13719"/>
    </physiologicalReaction>
</comment>
<comment type="cofactor">
    <cofactor evidence="1">
        <name>Mg(2+)</name>
        <dbReference type="ChEBI" id="CHEBI:18420"/>
    </cofactor>
    <cofactor evidence="1">
        <name>Mn(2+)</name>
        <dbReference type="ChEBI" id="CHEBI:29035"/>
    </cofactor>
</comment>
<comment type="pathway">
    <text evidence="1">Isoprenoid biosynthesis; isopentenyl diphosphate biosynthesis via DXP pathway; isopentenyl diphosphate from 1-deoxy-D-xylulose 5-phosphate: step 1/6.</text>
</comment>
<comment type="similarity">
    <text evidence="1">Belongs to the DXR family.</text>
</comment>
<reference key="1">
    <citation type="journal article" date="2010" name="Appl. Environ. Microbiol.">
        <title>The genome sequence of Psychrobacter arcticus 273-4, a psychroactive Siberian permafrost bacterium, reveals mechanisms for adaptation to low-temperature growth.</title>
        <authorList>
            <person name="Ayala-del-Rio H.L."/>
            <person name="Chain P.S."/>
            <person name="Grzymski J.J."/>
            <person name="Ponder M.A."/>
            <person name="Ivanova N."/>
            <person name="Bergholz P.W."/>
            <person name="Di Bartolo G."/>
            <person name="Hauser L."/>
            <person name="Land M."/>
            <person name="Bakermans C."/>
            <person name="Rodrigues D."/>
            <person name="Klappenbach J."/>
            <person name="Zarka D."/>
            <person name="Larimer F."/>
            <person name="Richardson P."/>
            <person name="Murray A."/>
            <person name="Thomashow M."/>
            <person name="Tiedje J.M."/>
        </authorList>
    </citation>
    <scope>NUCLEOTIDE SEQUENCE [LARGE SCALE GENOMIC DNA]</scope>
    <source>
        <strain>DSM 17307 / VKM B-2377 / 273-4</strain>
    </source>
</reference>
<accession>Q4FRH9</accession>
<name>DXR_PSYA2</name>
<protein>
    <recommendedName>
        <fullName evidence="1">1-deoxy-D-xylulose 5-phosphate reductoisomerase</fullName>
        <shortName evidence="1">DXP reductoisomerase</shortName>
        <ecNumber evidence="1">1.1.1.267</ecNumber>
    </recommendedName>
    <alternativeName>
        <fullName evidence="1">1-deoxyxylulose-5-phosphate reductoisomerase</fullName>
    </alternativeName>
    <alternativeName>
        <fullName evidence="1">2-C-methyl-D-erythritol 4-phosphate synthase</fullName>
    </alternativeName>
</protein>
<feature type="chain" id="PRO_0000163702" description="1-deoxy-D-xylulose 5-phosphate reductoisomerase">
    <location>
        <begin position="1"/>
        <end position="402"/>
    </location>
</feature>
<feature type="binding site" evidence="1">
    <location>
        <position position="13"/>
    </location>
    <ligand>
        <name>NADPH</name>
        <dbReference type="ChEBI" id="CHEBI:57783"/>
    </ligand>
</feature>
<feature type="binding site" evidence="1">
    <location>
        <position position="14"/>
    </location>
    <ligand>
        <name>NADPH</name>
        <dbReference type="ChEBI" id="CHEBI:57783"/>
    </ligand>
</feature>
<feature type="binding site" evidence="1">
    <location>
        <position position="15"/>
    </location>
    <ligand>
        <name>NADPH</name>
        <dbReference type="ChEBI" id="CHEBI:57783"/>
    </ligand>
</feature>
<feature type="binding site" evidence="1">
    <location>
        <position position="16"/>
    </location>
    <ligand>
        <name>NADPH</name>
        <dbReference type="ChEBI" id="CHEBI:57783"/>
    </ligand>
</feature>
<feature type="binding site" evidence="1">
    <location>
        <position position="126"/>
    </location>
    <ligand>
        <name>NADPH</name>
        <dbReference type="ChEBI" id="CHEBI:57783"/>
    </ligand>
</feature>
<feature type="binding site" evidence="1">
    <location>
        <position position="127"/>
    </location>
    <ligand>
        <name>1-deoxy-D-xylulose 5-phosphate</name>
        <dbReference type="ChEBI" id="CHEBI:57792"/>
    </ligand>
</feature>
<feature type="binding site" evidence="1">
    <location>
        <position position="128"/>
    </location>
    <ligand>
        <name>NADPH</name>
        <dbReference type="ChEBI" id="CHEBI:57783"/>
    </ligand>
</feature>
<feature type="binding site" evidence="1">
    <location>
        <position position="152"/>
    </location>
    <ligand>
        <name>Mn(2+)</name>
        <dbReference type="ChEBI" id="CHEBI:29035"/>
    </ligand>
</feature>
<feature type="binding site" evidence="1">
    <location>
        <position position="153"/>
    </location>
    <ligand>
        <name>1-deoxy-D-xylulose 5-phosphate</name>
        <dbReference type="ChEBI" id="CHEBI:57792"/>
    </ligand>
</feature>
<feature type="binding site" evidence="1">
    <location>
        <position position="154"/>
    </location>
    <ligand>
        <name>1-deoxy-D-xylulose 5-phosphate</name>
        <dbReference type="ChEBI" id="CHEBI:57792"/>
    </ligand>
</feature>
<feature type="binding site" evidence="1">
    <location>
        <position position="154"/>
    </location>
    <ligand>
        <name>Mn(2+)</name>
        <dbReference type="ChEBI" id="CHEBI:29035"/>
    </ligand>
</feature>
<feature type="binding site" evidence="1">
    <location>
        <position position="188"/>
    </location>
    <ligand>
        <name>1-deoxy-D-xylulose 5-phosphate</name>
        <dbReference type="ChEBI" id="CHEBI:57792"/>
    </ligand>
</feature>
<feature type="binding site" evidence="1">
    <location>
        <position position="211"/>
    </location>
    <ligand>
        <name>1-deoxy-D-xylulose 5-phosphate</name>
        <dbReference type="ChEBI" id="CHEBI:57792"/>
    </ligand>
</feature>
<feature type="binding site" evidence="1">
    <location>
        <position position="217"/>
    </location>
    <ligand>
        <name>NADPH</name>
        <dbReference type="ChEBI" id="CHEBI:57783"/>
    </ligand>
</feature>
<feature type="binding site" evidence="1">
    <location>
        <position position="224"/>
    </location>
    <ligand>
        <name>1-deoxy-D-xylulose 5-phosphate</name>
        <dbReference type="ChEBI" id="CHEBI:57792"/>
    </ligand>
</feature>
<feature type="binding site" evidence="1">
    <location>
        <position position="229"/>
    </location>
    <ligand>
        <name>1-deoxy-D-xylulose 5-phosphate</name>
        <dbReference type="ChEBI" id="CHEBI:57792"/>
    </ligand>
</feature>
<feature type="binding site" evidence="1">
    <location>
        <position position="230"/>
    </location>
    <ligand>
        <name>1-deoxy-D-xylulose 5-phosphate</name>
        <dbReference type="ChEBI" id="CHEBI:57792"/>
    </ligand>
</feature>
<feature type="binding site" evidence="1">
    <location>
        <position position="233"/>
    </location>
    <ligand>
        <name>1-deoxy-D-xylulose 5-phosphate</name>
        <dbReference type="ChEBI" id="CHEBI:57792"/>
    </ligand>
</feature>
<feature type="binding site" evidence="1">
    <location>
        <position position="233"/>
    </location>
    <ligand>
        <name>Mn(2+)</name>
        <dbReference type="ChEBI" id="CHEBI:29035"/>
    </ligand>
</feature>